<protein>
    <recommendedName>
        <fullName evidence="1">Clustered mitochondria protein homolog</fullName>
    </recommendedName>
    <alternativeName>
        <fullName evidence="1">Protein TIF31 homolog</fullName>
    </alternativeName>
</protein>
<dbReference type="EMBL" id="AAHF01000002">
    <property type="protein sequence ID" value="EAL92501.1"/>
    <property type="molecule type" value="Genomic_DNA"/>
</dbReference>
<dbReference type="RefSeq" id="XP_754539.1">
    <property type="nucleotide sequence ID" value="XM_749446.1"/>
</dbReference>
<dbReference type="SMR" id="Q4WXV2"/>
<dbReference type="FunCoup" id="Q4WXV2">
    <property type="interactions" value="970"/>
</dbReference>
<dbReference type="STRING" id="330879.Q4WXV2"/>
<dbReference type="EnsemblFungi" id="EAL92501">
    <property type="protein sequence ID" value="EAL92501"/>
    <property type="gene ID" value="AFUA_3G10800"/>
</dbReference>
<dbReference type="GeneID" id="3512080"/>
<dbReference type="KEGG" id="afm:AFUA_3G10800"/>
<dbReference type="eggNOG" id="KOG1839">
    <property type="taxonomic scope" value="Eukaryota"/>
</dbReference>
<dbReference type="HOGENOM" id="CLU_003256_2_0_1"/>
<dbReference type="InParanoid" id="Q4WXV2"/>
<dbReference type="OMA" id="HPVWDKD"/>
<dbReference type="OrthoDB" id="1414216at2759"/>
<dbReference type="Proteomes" id="UP000002530">
    <property type="component" value="Chromosome 3"/>
</dbReference>
<dbReference type="GO" id="GO:0005737">
    <property type="term" value="C:cytoplasm"/>
    <property type="evidence" value="ECO:0000318"/>
    <property type="project" value="GO_Central"/>
</dbReference>
<dbReference type="GO" id="GO:0003729">
    <property type="term" value="F:mRNA binding"/>
    <property type="evidence" value="ECO:0000318"/>
    <property type="project" value="GO_Central"/>
</dbReference>
<dbReference type="GO" id="GO:0048312">
    <property type="term" value="P:intracellular distribution of mitochondria"/>
    <property type="evidence" value="ECO:0000318"/>
    <property type="project" value="GO_Central"/>
</dbReference>
<dbReference type="GO" id="GO:0007005">
    <property type="term" value="P:mitochondrion organization"/>
    <property type="evidence" value="ECO:0007669"/>
    <property type="project" value="UniProtKB-UniRule"/>
</dbReference>
<dbReference type="CDD" id="cd15466">
    <property type="entry name" value="CLU-central"/>
    <property type="match status" value="1"/>
</dbReference>
<dbReference type="FunFam" id="1.25.40.10:FF:000293">
    <property type="entry name" value="Clustered mitochondria protein homolog"/>
    <property type="match status" value="1"/>
</dbReference>
<dbReference type="FunFam" id="1.25.40.10:FF:000532">
    <property type="entry name" value="Clustered mitochondria protein homolog"/>
    <property type="match status" value="1"/>
</dbReference>
<dbReference type="FunFam" id="3.30.2280.10:FF:000002">
    <property type="entry name" value="Clustered mitochondria protein homolog"/>
    <property type="match status" value="1"/>
</dbReference>
<dbReference type="Gene3D" id="3.30.2280.10">
    <property type="entry name" value="Hypothetical protein (hspc210)"/>
    <property type="match status" value="1"/>
</dbReference>
<dbReference type="Gene3D" id="1.25.40.10">
    <property type="entry name" value="Tetratricopeptide repeat domain"/>
    <property type="match status" value="2"/>
</dbReference>
<dbReference type="HAMAP" id="MF_03013">
    <property type="entry name" value="CLU"/>
    <property type="match status" value="1"/>
</dbReference>
<dbReference type="InterPro" id="IPR033646">
    <property type="entry name" value="CLU-central"/>
</dbReference>
<dbReference type="InterPro" id="IPR025697">
    <property type="entry name" value="CLU_dom"/>
</dbReference>
<dbReference type="InterPro" id="IPR028275">
    <property type="entry name" value="CLU_N"/>
</dbReference>
<dbReference type="InterPro" id="IPR027523">
    <property type="entry name" value="CLU_prot"/>
</dbReference>
<dbReference type="InterPro" id="IPR023231">
    <property type="entry name" value="GSKIP_dom_sf"/>
</dbReference>
<dbReference type="InterPro" id="IPR011990">
    <property type="entry name" value="TPR-like_helical_dom_sf"/>
</dbReference>
<dbReference type="InterPro" id="IPR019734">
    <property type="entry name" value="TPR_rpt"/>
</dbReference>
<dbReference type="PANTHER" id="PTHR12601:SF6">
    <property type="entry name" value="CLUSTERED MITOCHONDRIA PROTEIN HOMOLOG"/>
    <property type="match status" value="1"/>
</dbReference>
<dbReference type="PANTHER" id="PTHR12601">
    <property type="entry name" value="EUKARYOTIC TRANSLATION INITIATION FACTOR 3 SUBUNIT EIF-3"/>
    <property type="match status" value="1"/>
</dbReference>
<dbReference type="Pfam" id="PF13236">
    <property type="entry name" value="CLU"/>
    <property type="match status" value="1"/>
</dbReference>
<dbReference type="Pfam" id="PF15044">
    <property type="entry name" value="CLU_N"/>
    <property type="match status" value="1"/>
</dbReference>
<dbReference type="Pfam" id="PF12807">
    <property type="entry name" value="eIF3_p135"/>
    <property type="match status" value="1"/>
</dbReference>
<dbReference type="Pfam" id="PF13374">
    <property type="entry name" value="TPR_10"/>
    <property type="match status" value="2"/>
</dbReference>
<dbReference type="Pfam" id="PF13424">
    <property type="entry name" value="TPR_12"/>
    <property type="match status" value="1"/>
</dbReference>
<dbReference type="SUPFAM" id="SSF103107">
    <property type="entry name" value="Hypothetical protein c14orf129, hspc210"/>
    <property type="match status" value="1"/>
</dbReference>
<dbReference type="SUPFAM" id="SSF48452">
    <property type="entry name" value="TPR-like"/>
    <property type="match status" value="2"/>
</dbReference>
<dbReference type="PROSITE" id="PS51823">
    <property type="entry name" value="CLU"/>
    <property type="match status" value="1"/>
</dbReference>
<dbReference type="PROSITE" id="PS50005">
    <property type="entry name" value="TPR"/>
    <property type="match status" value="1"/>
</dbReference>
<gene>
    <name evidence="1" type="primary">clu1</name>
    <name type="synonym">tif31</name>
    <name type="ORF">AFUA_3G10800</name>
</gene>
<name>CLU_ASPFU</name>
<keyword id="KW-0963">Cytoplasm</keyword>
<keyword id="KW-1185">Reference proteome</keyword>
<keyword id="KW-0677">Repeat</keyword>
<keyword id="KW-0802">TPR repeat</keyword>
<accession>Q4WXV2</accession>
<sequence length="1310" mass="145979">MAIWSTRKVGLDNLRISQLLNFRGFDPSALVTKLTDPFSLQRLLTLNQSRSPPMVNRLKDSRKRRAAVVCRIRDTRDGWFSSLSSLTSSVIGLFQISVKLPHEPYKIQVMVSSQEQVQDVRQSIVELPSTFQYTCFHLEFNGKRINDFVELSEVEGLKADSEIVLVEDPYTEKEARMHVVRFRDLVGAAGDRSDNLHGLNAGLSLHDAVTAEAATDDVKEHSLSKYDIAASPSLETILPRAEAPLPKTVKSISLSAWNPPPYHLRQKGHLLYLQVTTNEGEQFQITSHVSGFYVNKCSNHKFDPLPRTTPKKVSAHSLLTLISKLSPSFNSAFEALQESNNKKDLLTTFPFQNAIPNSPWLVTPPSSNPNSHQADITRSQESYLVSGVDNAETLRDWNEEFQTTRELPRETVQDRVFRERLTSKLFADYNEAAARGAVLVARGEVAPLNPTEERDAQIFVYNNIFYSFGADGVGTFVSEGGDEAARVAVGKDVLGIKAVNQLDINGLFTPGTVVVDYLGKRIVGQSIVPGIFKQREPGEHQIDYGGVEGKDVVATHPDFVSVFEKMSKALRIKKHPVWDKEGKRHDLEGSVETKGLLGTDGRKYVLDLYRVTPLDVVWQEEPGSEDYPHRMSVLRLELVEAYWRSKMSQYVKAEVERRRAAKAQEDAANKEQPSETTESKEGESEEKAEEALDQERVDISGFQLALNPDVCSGQVPQTEEEKKQWAEDEKEVRDACEFLRSKVIPELIQDLHDGDVGFPMDGRSLSQLLHKRGINIRYLGKLAQLSKEKGSRLEALTTLLVQEMIARAFKHIANRYLRNVPAPFVASCVAHLLNCLLGADVNPKPSAEIDASLREIYPEGDFSFEKVTPETLRAEVEKQVTVRYRYTLETEWFSSLRHLQLLRDIAIKLGLQLGARDYAFTKAQLPAKVPVANGVNGASHDESKKKKKKGGDSKSPSRAVVEEKPVVSIVPDDIVNVVPLVKDASPRSSLAEEALEAGRISLMQNQKQLGQELILESLSLHEQIYGILHPEVAKLYHQLSMLYYQTDEKEAAVELARKAVIVTERTLGVDSADTILAYLNLSLFEHASGNTKTALVYIKHAMDLWKIIYGSNHPDSITTMNNAAVMLQHLKQYSDSRKWFEASLAVCESLFGKQSINTATILFQLAQALALDQDSKGAVGKMRDAYNIFLNQLGPNDRNTKEAETWLEQLTQNAVSIAKHAKDIQARRLRRINMNPRVTTLGTKVQPQVGQTAPEASGAKGAANASMDSRSIDELLKFIEGGDATSSRSKQKKRAAASNPKLRGSKKSSA</sequence>
<proteinExistence type="inferred from homology"/>
<organism>
    <name type="scientific">Aspergillus fumigatus (strain ATCC MYA-4609 / CBS 101355 / FGSC A1100 / Af293)</name>
    <name type="common">Neosartorya fumigata</name>
    <dbReference type="NCBI Taxonomy" id="330879"/>
    <lineage>
        <taxon>Eukaryota</taxon>
        <taxon>Fungi</taxon>
        <taxon>Dikarya</taxon>
        <taxon>Ascomycota</taxon>
        <taxon>Pezizomycotina</taxon>
        <taxon>Eurotiomycetes</taxon>
        <taxon>Eurotiomycetidae</taxon>
        <taxon>Eurotiales</taxon>
        <taxon>Aspergillaceae</taxon>
        <taxon>Aspergillus</taxon>
        <taxon>Aspergillus subgen. Fumigati</taxon>
    </lineage>
</organism>
<evidence type="ECO:0000255" key="1">
    <source>
        <dbReference type="HAMAP-Rule" id="MF_03013"/>
    </source>
</evidence>
<evidence type="ECO:0000255" key="2">
    <source>
        <dbReference type="PROSITE-ProRule" id="PRU01167"/>
    </source>
</evidence>
<evidence type="ECO:0000256" key="3">
    <source>
        <dbReference type="SAM" id="MobiDB-lite"/>
    </source>
</evidence>
<reference key="1">
    <citation type="journal article" date="2005" name="Nature">
        <title>Genomic sequence of the pathogenic and allergenic filamentous fungus Aspergillus fumigatus.</title>
        <authorList>
            <person name="Nierman W.C."/>
            <person name="Pain A."/>
            <person name="Anderson M.J."/>
            <person name="Wortman J.R."/>
            <person name="Kim H.S."/>
            <person name="Arroyo J."/>
            <person name="Berriman M."/>
            <person name="Abe K."/>
            <person name="Archer D.B."/>
            <person name="Bermejo C."/>
            <person name="Bennett J.W."/>
            <person name="Bowyer P."/>
            <person name="Chen D."/>
            <person name="Collins M."/>
            <person name="Coulsen R."/>
            <person name="Davies R."/>
            <person name="Dyer P.S."/>
            <person name="Farman M.L."/>
            <person name="Fedorova N."/>
            <person name="Fedorova N.D."/>
            <person name="Feldblyum T.V."/>
            <person name="Fischer R."/>
            <person name="Fosker N."/>
            <person name="Fraser A."/>
            <person name="Garcia J.L."/>
            <person name="Garcia M.J."/>
            <person name="Goble A."/>
            <person name="Goldman G.H."/>
            <person name="Gomi K."/>
            <person name="Griffith-Jones S."/>
            <person name="Gwilliam R."/>
            <person name="Haas B.J."/>
            <person name="Haas H."/>
            <person name="Harris D.E."/>
            <person name="Horiuchi H."/>
            <person name="Huang J."/>
            <person name="Humphray S."/>
            <person name="Jimenez J."/>
            <person name="Keller N."/>
            <person name="Khouri H."/>
            <person name="Kitamoto K."/>
            <person name="Kobayashi T."/>
            <person name="Konzack S."/>
            <person name="Kulkarni R."/>
            <person name="Kumagai T."/>
            <person name="Lafton A."/>
            <person name="Latge J.-P."/>
            <person name="Li W."/>
            <person name="Lord A."/>
            <person name="Lu C."/>
            <person name="Majoros W.H."/>
            <person name="May G.S."/>
            <person name="Miller B.L."/>
            <person name="Mohamoud Y."/>
            <person name="Molina M."/>
            <person name="Monod M."/>
            <person name="Mouyna I."/>
            <person name="Mulligan S."/>
            <person name="Murphy L.D."/>
            <person name="O'Neil S."/>
            <person name="Paulsen I."/>
            <person name="Penalva M.A."/>
            <person name="Pertea M."/>
            <person name="Price C."/>
            <person name="Pritchard B.L."/>
            <person name="Quail M.A."/>
            <person name="Rabbinowitsch E."/>
            <person name="Rawlins N."/>
            <person name="Rajandream M.A."/>
            <person name="Reichard U."/>
            <person name="Renauld H."/>
            <person name="Robson G.D."/>
            <person name="Rodriguez de Cordoba S."/>
            <person name="Rodriguez-Pena J.M."/>
            <person name="Ronning C.M."/>
            <person name="Rutter S."/>
            <person name="Salzberg S.L."/>
            <person name="Sanchez M."/>
            <person name="Sanchez-Ferrero J.C."/>
            <person name="Saunders D."/>
            <person name="Seeger K."/>
            <person name="Squares R."/>
            <person name="Squares S."/>
            <person name="Takeuchi M."/>
            <person name="Tekaia F."/>
            <person name="Turner G."/>
            <person name="Vazquez de Aldana C.R."/>
            <person name="Weidman J."/>
            <person name="White O."/>
            <person name="Woodward J.R."/>
            <person name="Yu J.-H."/>
            <person name="Fraser C.M."/>
            <person name="Galagan J.E."/>
            <person name="Asai K."/>
            <person name="Machida M."/>
            <person name="Hall N."/>
            <person name="Barrell B.G."/>
            <person name="Denning D.W."/>
        </authorList>
    </citation>
    <scope>NUCLEOTIDE SEQUENCE [LARGE SCALE GENOMIC DNA]</scope>
    <source>
        <strain>ATCC MYA-4609 / CBS 101355 / FGSC A1100 / Af293</strain>
    </source>
</reference>
<feature type="chain" id="PRO_0000366394" description="Clustered mitochondria protein homolog">
    <location>
        <begin position="1"/>
        <end position="1310"/>
    </location>
</feature>
<feature type="domain" description="Clu" evidence="2">
    <location>
        <begin position="375"/>
        <end position="619"/>
    </location>
</feature>
<feature type="repeat" description="TPR 1">
    <location>
        <begin position="1033"/>
        <end position="1066"/>
    </location>
</feature>
<feature type="repeat" description="TPR 2">
    <location>
        <begin position="1075"/>
        <end position="1108"/>
    </location>
</feature>
<feature type="repeat" description="TPR 3">
    <location>
        <begin position="1117"/>
        <end position="1150"/>
    </location>
</feature>
<feature type="region of interest" description="Disordered" evidence="3">
    <location>
        <begin position="662"/>
        <end position="692"/>
    </location>
</feature>
<feature type="region of interest" description="Disordered" evidence="3">
    <location>
        <begin position="931"/>
        <end position="960"/>
    </location>
</feature>
<feature type="region of interest" description="Disordered" evidence="3">
    <location>
        <begin position="1245"/>
        <end position="1266"/>
    </location>
</feature>
<feature type="region of interest" description="Disordered" evidence="3">
    <location>
        <begin position="1281"/>
        <end position="1310"/>
    </location>
</feature>
<feature type="compositionally biased region" description="Basic and acidic residues" evidence="3">
    <location>
        <begin position="662"/>
        <end position="682"/>
    </location>
</feature>
<comment type="function">
    <text evidence="1">mRNA-binding protein involved in proper cytoplasmic distribution of mitochondria.</text>
</comment>
<comment type="subunit">
    <text evidence="1">May associate with the eukaryotic translation initiation factor 3 (eIF-3) complex.</text>
</comment>
<comment type="subcellular location">
    <subcellularLocation>
        <location evidence="1">Cytoplasm</location>
    </subcellularLocation>
</comment>
<comment type="similarity">
    <text evidence="1">Belongs to the CLU family.</text>
</comment>